<accession>O67381</accession>
<reference key="1">
    <citation type="journal article" date="1998" name="Nature">
        <title>The complete genome of the hyperthermophilic bacterium Aquifex aeolicus.</title>
        <authorList>
            <person name="Deckert G."/>
            <person name="Warren P.V."/>
            <person name="Gaasterland T."/>
            <person name="Young W.G."/>
            <person name="Lenox A.L."/>
            <person name="Graham D.E."/>
            <person name="Overbeek R."/>
            <person name="Snead M.A."/>
            <person name="Keller M."/>
            <person name="Aujay M."/>
            <person name="Huber R."/>
            <person name="Feldman R.A."/>
            <person name="Short J.M."/>
            <person name="Olsen G.J."/>
            <person name="Swanson R.V."/>
        </authorList>
    </citation>
    <scope>NUCLEOTIDE SEQUENCE [LARGE SCALE GENOMIC DNA]</scope>
    <source>
        <strain>VF5</strain>
    </source>
</reference>
<dbReference type="EMBL" id="AE000657">
    <property type="protein sequence ID" value="AAC07356.1"/>
    <property type="molecule type" value="Genomic_DNA"/>
</dbReference>
<dbReference type="PIR" id="B70419">
    <property type="entry name" value="B70419"/>
</dbReference>
<dbReference type="RefSeq" id="NP_213945.1">
    <property type="nucleotide sequence ID" value="NC_000918.1"/>
</dbReference>
<dbReference type="STRING" id="224324.aq_1369"/>
<dbReference type="EnsemblBacteria" id="AAC07356">
    <property type="protein sequence ID" value="AAC07356"/>
    <property type="gene ID" value="aq_1369"/>
</dbReference>
<dbReference type="KEGG" id="aae:aq_1369"/>
<dbReference type="PATRIC" id="fig|224324.8.peg.1072"/>
<dbReference type="HOGENOM" id="CLU_1287377_0_0_0"/>
<dbReference type="InParanoid" id="O67381"/>
<dbReference type="OrthoDB" id="13782at2"/>
<dbReference type="Proteomes" id="UP000000798">
    <property type="component" value="Chromosome"/>
</dbReference>
<sequence>MTTFPFLFIVLRFYTLMFPVKIFLKLLRGDDMEIQTLVRSDKKLTPENVREFLKENYPEKYKLIENWEELQGEFDVQKLGGNEYLVIYRIPEKEFEKELGIFQSVEEAMGAFLSTALEHGWEEVPKNYVIYHADFVEGGNKLIAAIKTEEGISTYDQLKLEEMMKKMVRYPRVVVYSSDVLTYIKDIYPDVQSKAYVIAREIAKETGSAPELEELGKIYGVDTSTLEGKLELIEKLLQNPVKLPGGKEVNLKPYWYPLEA</sequence>
<feature type="chain" id="PRO_0000186924" description="Uncharacterized protein aq_1369">
    <location>
        <begin position="1"/>
        <end position="260"/>
    </location>
</feature>
<gene>
    <name type="ordered locus">aq_1369</name>
</gene>
<keyword id="KW-1185">Reference proteome</keyword>
<organism>
    <name type="scientific">Aquifex aeolicus (strain VF5)</name>
    <dbReference type="NCBI Taxonomy" id="224324"/>
    <lineage>
        <taxon>Bacteria</taxon>
        <taxon>Pseudomonadati</taxon>
        <taxon>Aquificota</taxon>
        <taxon>Aquificia</taxon>
        <taxon>Aquificales</taxon>
        <taxon>Aquificaceae</taxon>
        <taxon>Aquifex</taxon>
    </lineage>
</organism>
<protein>
    <recommendedName>
        <fullName>Uncharacterized protein aq_1369</fullName>
    </recommendedName>
</protein>
<proteinExistence type="predicted"/>
<name>Y1369_AQUAE</name>